<evidence type="ECO:0000250" key="1"/>
<evidence type="ECO:0000250" key="2">
    <source>
        <dbReference type="UniProtKB" id="P20719"/>
    </source>
</evidence>
<evidence type="ECO:0000255" key="3">
    <source>
        <dbReference type="PROSITE-ProRule" id="PRU00108"/>
    </source>
</evidence>
<evidence type="ECO:0000305" key="4"/>
<keyword id="KW-0217">Developmental protein</keyword>
<keyword id="KW-0238">DNA-binding</keyword>
<keyword id="KW-0371">Homeobox</keyword>
<keyword id="KW-0539">Nucleus</keyword>
<keyword id="KW-1185">Reference proteome</keyword>
<keyword id="KW-0804">Transcription</keyword>
<keyword id="KW-0805">Transcription regulation</keyword>
<gene>
    <name type="primary">HOXA5</name>
    <name type="synonym">HOXA-5</name>
</gene>
<name>HXA5_SHEEP</name>
<proteinExistence type="evidence at transcript level"/>
<reference key="1">
    <citation type="submission" date="1996-06" db="EMBL/GenBank/DDBJ databases">
        <authorList>
            <person name="Roche P.J."/>
        </authorList>
    </citation>
    <scope>NUCLEOTIDE SEQUENCE [MRNA]</scope>
</reference>
<dbReference type="EMBL" id="U61978">
    <property type="protein sequence ID" value="AAB04754.1"/>
    <property type="molecule type" value="mRNA"/>
</dbReference>
<dbReference type="SMR" id="Q28599"/>
<dbReference type="PaxDb" id="9940-ENSOARP00000007539"/>
<dbReference type="eggNOG" id="KOG0489">
    <property type="taxonomic scope" value="Eukaryota"/>
</dbReference>
<dbReference type="Proteomes" id="UP000002356">
    <property type="component" value="Unplaced"/>
</dbReference>
<dbReference type="GO" id="GO:0005634">
    <property type="term" value="C:nucleus"/>
    <property type="evidence" value="ECO:0007669"/>
    <property type="project" value="UniProtKB-SubCell"/>
</dbReference>
<dbReference type="GO" id="GO:0000981">
    <property type="term" value="F:DNA-binding transcription factor activity, RNA polymerase II-specific"/>
    <property type="evidence" value="ECO:0007669"/>
    <property type="project" value="InterPro"/>
</dbReference>
<dbReference type="GO" id="GO:0000978">
    <property type="term" value="F:RNA polymerase II cis-regulatory region sequence-specific DNA binding"/>
    <property type="evidence" value="ECO:0007669"/>
    <property type="project" value="TreeGrafter"/>
</dbReference>
<dbReference type="GO" id="GO:0009952">
    <property type="term" value="P:anterior/posterior pattern specification"/>
    <property type="evidence" value="ECO:0007669"/>
    <property type="project" value="TreeGrafter"/>
</dbReference>
<dbReference type="CDD" id="cd00086">
    <property type="entry name" value="homeodomain"/>
    <property type="match status" value="1"/>
</dbReference>
<dbReference type="Gene3D" id="1.10.10.60">
    <property type="entry name" value="Homeodomain-like"/>
    <property type="match status" value="1"/>
</dbReference>
<dbReference type="InterPro" id="IPR050296">
    <property type="entry name" value="Antp_homeobox"/>
</dbReference>
<dbReference type="InterPro" id="IPR001356">
    <property type="entry name" value="HD"/>
</dbReference>
<dbReference type="InterPro" id="IPR020479">
    <property type="entry name" value="HD_metazoa"/>
</dbReference>
<dbReference type="InterPro" id="IPR017970">
    <property type="entry name" value="Homeobox_CS"/>
</dbReference>
<dbReference type="InterPro" id="IPR009057">
    <property type="entry name" value="Homeodomain-like_sf"/>
</dbReference>
<dbReference type="PANTHER" id="PTHR45659:SF4">
    <property type="entry name" value="HOMEOBOX PROTEIN ABDOMINAL-A"/>
    <property type="match status" value="1"/>
</dbReference>
<dbReference type="PANTHER" id="PTHR45659">
    <property type="entry name" value="HOMEOBOX PROTEIN HOX"/>
    <property type="match status" value="1"/>
</dbReference>
<dbReference type="Pfam" id="PF00046">
    <property type="entry name" value="Homeodomain"/>
    <property type="match status" value="1"/>
</dbReference>
<dbReference type="PRINTS" id="PR00024">
    <property type="entry name" value="HOMEOBOX"/>
</dbReference>
<dbReference type="SMART" id="SM00389">
    <property type="entry name" value="HOX"/>
    <property type="match status" value="1"/>
</dbReference>
<dbReference type="SUPFAM" id="SSF46689">
    <property type="entry name" value="Homeodomain-like"/>
    <property type="match status" value="1"/>
</dbReference>
<dbReference type="PROSITE" id="PS00027">
    <property type="entry name" value="HOMEOBOX_1"/>
    <property type="match status" value="1"/>
</dbReference>
<dbReference type="PROSITE" id="PS50071">
    <property type="entry name" value="HOMEOBOX_2"/>
    <property type="match status" value="1"/>
</dbReference>
<organism>
    <name type="scientific">Ovis aries</name>
    <name type="common">Sheep</name>
    <dbReference type="NCBI Taxonomy" id="9940"/>
    <lineage>
        <taxon>Eukaryota</taxon>
        <taxon>Metazoa</taxon>
        <taxon>Chordata</taxon>
        <taxon>Craniata</taxon>
        <taxon>Vertebrata</taxon>
        <taxon>Euteleostomi</taxon>
        <taxon>Mammalia</taxon>
        <taxon>Eutheria</taxon>
        <taxon>Laurasiatheria</taxon>
        <taxon>Artiodactyla</taxon>
        <taxon>Ruminantia</taxon>
        <taxon>Pecora</taxon>
        <taxon>Bovidae</taxon>
        <taxon>Caprinae</taxon>
        <taxon>Ovis</taxon>
    </lineage>
</organism>
<comment type="function">
    <text evidence="1">Sequence-specific transcription factor which is part of a developmental regulatory system that provides cells with specific positional identities on the anterior-posterior axis. Also binds to its own promoter. Binds specifically to the motif 5'-CYYNATTA[TG]Y-3' (By similarity).</text>
</comment>
<comment type="subunit">
    <text evidence="2">Forms a DNA-binding heterodimer with transcription factor PBX1.</text>
</comment>
<comment type="subcellular location">
    <subcellularLocation>
        <location>Nucleus</location>
    </subcellularLocation>
</comment>
<comment type="similarity">
    <text evidence="4">Belongs to the Antp homeobox family.</text>
</comment>
<sequence>QTLELEKEFHFNRYLTRRRRIEIAHALCLSERQIKIWFQNRRMKWKKDN</sequence>
<feature type="chain" id="PRO_0000200060" description="Homeobox protein Hox-A5">
    <location>
        <begin position="1" status="less than"/>
        <end position="49" status="greater than"/>
    </location>
</feature>
<feature type="DNA-binding region" description="Homeobox" evidence="3">
    <location>
        <begin position="1" status="less than"/>
        <end position="49"/>
    </location>
</feature>
<feature type="non-terminal residue">
    <location>
        <position position="1"/>
    </location>
</feature>
<feature type="non-terminal residue">
    <location>
        <position position="49"/>
    </location>
</feature>
<protein>
    <recommendedName>
        <fullName>Homeobox protein Hox-A5</fullName>
    </recommendedName>
</protein>
<accession>Q28599</accession>